<proteinExistence type="inferred from homology"/>
<dbReference type="EMBL" id="AY673996">
    <property type="protein sequence ID" value="AAT79676.1"/>
    <property type="molecule type" value="Genomic_DNA"/>
</dbReference>
<dbReference type="RefSeq" id="YP_063601.1">
    <property type="nucleotide sequence ID" value="NC_006137.1"/>
</dbReference>
<dbReference type="SMR" id="Q6B8V9"/>
<dbReference type="GeneID" id="2944003"/>
<dbReference type="GO" id="GO:0009507">
    <property type="term" value="C:chloroplast"/>
    <property type="evidence" value="ECO:0007669"/>
    <property type="project" value="UniProtKB-SubCell"/>
</dbReference>
<dbReference type="GO" id="GO:0022627">
    <property type="term" value="C:cytosolic small ribosomal subunit"/>
    <property type="evidence" value="ECO:0007669"/>
    <property type="project" value="TreeGrafter"/>
</dbReference>
<dbReference type="GO" id="GO:0019843">
    <property type="term" value="F:rRNA binding"/>
    <property type="evidence" value="ECO:0007669"/>
    <property type="project" value="UniProtKB-UniRule"/>
</dbReference>
<dbReference type="GO" id="GO:0003735">
    <property type="term" value="F:structural constituent of ribosome"/>
    <property type="evidence" value="ECO:0007669"/>
    <property type="project" value="InterPro"/>
</dbReference>
<dbReference type="GO" id="GO:0006412">
    <property type="term" value="P:translation"/>
    <property type="evidence" value="ECO:0007669"/>
    <property type="project" value="UniProtKB-UniRule"/>
</dbReference>
<dbReference type="CDD" id="cd02412">
    <property type="entry name" value="KH-II_30S_S3"/>
    <property type="match status" value="1"/>
</dbReference>
<dbReference type="FunFam" id="3.30.300.20:FF:000001">
    <property type="entry name" value="30S ribosomal protein S3"/>
    <property type="match status" value="1"/>
</dbReference>
<dbReference type="Gene3D" id="3.30.300.20">
    <property type="match status" value="1"/>
</dbReference>
<dbReference type="Gene3D" id="3.30.1140.32">
    <property type="entry name" value="Ribosomal protein S3, C-terminal domain"/>
    <property type="match status" value="1"/>
</dbReference>
<dbReference type="HAMAP" id="MF_01309_B">
    <property type="entry name" value="Ribosomal_uS3_B"/>
    <property type="match status" value="1"/>
</dbReference>
<dbReference type="InterPro" id="IPR004087">
    <property type="entry name" value="KH_dom"/>
</dbReference>
<dbReference type="InterPro" id="IPR015946">
    <property type="entry name" value="KH_dom-like_a/b"/>
</dbReference>
<dbReference type="InterPro" id="IPR004044">
    <property type="entry name" value="KH_dom_type_2"/>
</dbReference>
<dbReference type="InterPro" id="IPR009019">
    <property type="entry name" value="KH_sf_prok-type"/>
</dbReference>
<dbReference type="InterPro" id="IPR036419">
    <property type="entry name" value="Ribosomal_S3_C_sf"/>
</dbReference>
<dbReference type="InterPro" id="IPR005704">
    <property type="entry name" value="Ribosomal_uS3_bac-typ"/>
</dbReference>
<dbReference type="InterPro" id="IPR001351">
    <property type="entry name" value="Ribosomal_uS3_C"/>
</dbReference>
<dbReference type="InterPro" id="IPR018280">
    <property type="entry name" value="Ribosomal_uS3_CS"/>
</dbReference>
<dbReference type="NCBIfam" id="TIGR01009">
    <property type="entry name" value="rpsC_bact"/>
    <property type="match status" value="1"/>
</dbReference>
<dbReference type="PANTHER" id="PTHR11760">
    <property type="entry name" value="30S/40S RIBOSOMAL PROTEIN S3"/>
    <property type="match status" value="1"/>
</dbReference>
<dbReference type="PANTHER" id="PTHR11760:SF19">
    <property type="entry name" value="SMALL RIBOSOMAL SUBUNIT PROTEIN US3C"/>
    <property type="match status" value="1"/>
</dbReference>
<dbReference type="Pfam" id="PF07650">
    <property type="entry name" value="KH_2"/>
    <property type="match status" value="1"/>
</dbReference>
<dbReference type="Pfam" id="PF00189">
    <property type="entry name" value="Ribosomal_S3_C"/>
    <property type="match status" value="1"/>
</dbReference>
<dbReference type="SMART" id="SM00322">
    <property type="entry name" value="KH"/>
    <property type="match status" value="1"/>
</dbReference>
<dbReference type="SUPFAM" id="SSF54814">
    <property type="entry name" value="Prokaryotic type KH domain (KH-domain type II)"/>
    <property type="match status" value="1"/>
</dbReference>
<dbReference type="SUPFAM" id="SSF54821">
    <property type="entry name" value="Ribosomal protein S3 C-terminal domain"/>
    <property type="match status" value="1"/>
</dbReference>
<dbReference type="PROSITE" id="PS50823">
    <property type="entry name" value="KH_TYPE_2"/>
    <property type="match status" value="1"/>
</dbReference>
<dbReference type="PROSITE" id="PS00548">
    <property type="entry name" value="RIBOSOMAL_S3"/>
    <property type="match status" value="1"/>
</dbReference>
<reference key="1">
    <citation type="journal article" date="2004" name="J. Mol. Evol.">
        <title>Comparative analysis of the complete plastid genome sequence of the red alga Gracilaria tenuistipitata var. liui provides insights into the evolution of rhodoplasts and their relationship to other plastids.</title>
        <authorList>
            <person name="Hagopian J.C."/>
            <person name="Reis M."/>
            <person name="Kitajima J.P."/>
            <person name="Bhattacharya D."/>
            <person name="de Oliveira M.C."/>
        </authorList>
    </citation>
    <scope>NUCLEOTIDE SEQUENCE [LARGE SCALE GENOMIC DNA]</scope>
</reference>
<organism>
    <name type="scientific">Gracilaria tenuistipitata var. liui</name>
    <name type="common">Red alga</name>
    <dbReference type="NCBI Taxonomy" id="285951"/>
    <lineage>
        <taxon>Eukaryota</taxon>
        <taxon>Rhodophyta</taxon>
        <taxon>Florideophyceae</taxon>
        <taxon>Rhodymeniophycidae</taxon>
        <taxon>Gracilariales</taxon>
        <taxon>Gracilariaceae</taxon>
        <taxon>Gracilaria</taxon>
        <taxon>Gracilaria tenuistipitata</taxon>
    </lineage>
</organism>
<accession>Q6B8V9</accession>
<sequence length="217" mass="25055">MGQKTHPLGFRIGITRDHKSSWFSNMKSYPKLAQEDYKIRSCIEKQLHNASISLIYIDRKVDQVQVHIHTARPGIILGKMGRGLEDLRKKLETTLKNDTQIRINLIEITDPDKEATLIAEFIVQQLEKRIAFRRVIRQAMQRSQKAKNQGIKIQVSGRLNGAEIARSEWVREGRVPLQTLRAHIDYSYKTAHTIYGILGVKVWLFKGEKIITDKVDN</sequence>
<evidence type="ECO:0000250" key="1"/>
<evidence type="ECO:0000305" key="2"/>
<gene>
    <name type="primary">rps3</name>
    <name type="ordered locus">Grc000095</name>
</gene>
<name>RR3_GRATL</name>
<feature type="chain" id="PRO_0000130283" description="Small ribosomal subunit protein uS3c">
    <location>
        <begin position="1"/>
        <end position="217"/>
    </location>
</feature>
<feature type="domain" description="KH type-2">
    <location>
        <begin position="39"/>
        <end position="109"/>
    </location>
</feature>
<keyword id="KW-0150">Chloroplast</keyword>
<keyword id="KW-0934">Plastid</keyword>
<keyword id="KW-0687">Ribonucleoprotein</keyword>
<keyword id="KW-0689">Ribosomal protein</keyword>
<keyword id="KW-0694">RNA-binding</keyword>
<keyword id="KW-0699">rRNA-binding</keyword>
<geneLocation type="chloroplast"/>
<comment type="subunit">
    <text evidence="1">Part of the 30S ribosomal subunit.</text>
</comment>
<comment type="subcellular location">
    <subcellularLocation>
        <location>Plastid</location>
        <location>Chloroplast</location>
    </subcellularLocation>
</comment>
<comment type="similarity">
    <text evidence="2">Belongs to the universal ribosomal protein uS3 family.</text>
</comment>
<protein>
    <recommendedName>
        <fullName evidence="2">Small ribosomal subunit protein uS3c</fullName>
    </recommendedName>
    <alternativeName>
        <fullName>30S ribosomal protein S3, chloroplastic</fullName>
    </alternativeName>
</protein>